<feature type="signal peptide" evidence="2">
    <location>
        <begin position="1"/>
        <end position="18"/>
    </location>
</feature>
<feature type="chain" id="PRO_0000452457" description="Apolipoprotein E">
    <location>
        <begin position="19"/>
        <end position="308"/>
    </location>
</feature>
<feature type="repeat" description="1">
    <location>
        <begin position="75"/>
        <end position="96"/>
    </location>
</feature>
<feature type="repeat" description="2">
    <location>
        <begin position="97"/>
        <end position="118"/>
    </location>
</feature>
<feature type="repeat" description="3">
    <location>
        <begin position="119"/>
        <end position="140"/>
    </location>
</feature>
<feature type="repeat" description="4">
    <location>
        <begin position="141"/>
        <end position="162"/>
    </location>
</feature>
<feature type="repeat" description="5">
    <location>
        <begin position="163"/>
        <end position="184"/>
    </location>
</feature>
<feature type="repeat" description="6">
    <location>
        <begin position="185"/>
        <end position="206"/>
    </location>
</feature>
<feature type="repeat" description="7">
    <location>
        <begin position="207"/>
        <end position="224"/>
    </location>
</feature>
<feature type="repeat" description="8">
    <location>
        <begin position="225"/>
        <end position="246"/>
    </location>
</feature>
<feature type="region of interest" description="8 X 22 AA approximate tandem repeats">
    <location>
        <begin position="75"/>
        <end position="246"/>
    </location>
</feature>
<feature type="region of interest" description="LDL and other lipoprotein receptors binding" evidence="1">
    <location>
        <begin position="153"/>
        <end position="163"/>
    </location>
</feature>
<feature type="region of interest" description="Lipid-binding and lipoprotein association" evidence="1">
    <location>
        <begin position="205"/>
        <end position="281"/>
    </location>
</feature>
<feature type="region of interest" description="Homooligomerization" evidence="1">
    <location>
        <begin position="257"/>
        <end position="308"/>
    </location>
</feature>
<feature type="region of interest" description="Specificity for association with VLDL" evidence="1">
    <location>
        <begin position="269"/>
        <end position="281"/>
    </location>
</feature>
<feature type="binding site" evidence="1">
    <location>
        <begin position="157"/>
        <end position="160"/>
    </location>
    <ligand>
        <name>heparin</name>
        <dbReference type="ChEBI" id="CHEBI:28304"/>
    </ligand>
</feature>
<feature type="binding site" evidence="1">
    <location>
        <begin position="220"/>
        <end position="227"/>
    </location>
    <ligand>
        <name>heparin</name>
        <dbReference type="ChEBI" id="CHEBI:28304"/>
    </ligand>
</feature>
<comment type="function">
    <text evidence="1">APOE is an apolipoprotein, a protein associating with lipid particles, that mainly functions in lipoprotein-mediated lipid transport between organs via the plasma and interstitial fluids. APOE is a core component of plasma lipoproteins and is involved in their production, conversion and clearance. Apolipoproteins are amphipathic molecules that interact both with lipids of the lipoprotein particle core and the aqueous environment of the plasma. As such, APOE associates with chylomicrons, chylomicron remnants, very low density lipoproteins (VLDL) and intermediate density lipoproteins (IDL) but shows a preferential binding to high-density lipoproteins (HDL). It also binds a wide range of cellular receptors including the LDL receptor/LDLR and the very low-density lipoprotein receptor/VLDLR that mediate the cellular uptake of the APOE-containing lipoprotein particles. Finally, APOE also has a heparin-binding activity and binds heparan-sulfate proteoglycans on the surface of cells, a property that supports the capture and the receptor-mediated uptake of APOE-containing lipoproteins by cells.</text>
</comment>
<comment type="subunit">
    <text evidence="1">Homotetramer. May interact with ABCA1; functionally associated with ABCA1 in the biogenesis of HDLs. May interact with APP/A4 amyloid-beta peptide; the interaction is extremely stable in vitro but its physiological significance is unclear. May interact with MAPT. May interact with MAP2. In the cerebrospinal fluid, interacts with secreted SORL1. Interacts with PMEL; this allows the loading of PMEL luminal fragment on ILVs to induce fibril nucleation.</text>
</comment>
<comment type="subcellular location">
    <subcellularLocation>
        <location evidence="1">Secreted</location>
    </subcellularLocation>
    <subcellularLocation>
        <location evidence="1">Secreted</location>
        <location evidence="1">Extracellular space</location>
    </subcellularLocation>
    <subcellularLocation>
        <location evidence="1">Secreted</location>
        <location evidence="1">Extracellular space</location>
        <location evidence="1">Extracellular matrix</location>
    </subcellularLocation>
    <subcellularLocation>
        <location evidence="1">Extracellular vesicle</location>
    </subcellularLocation>
    <subcellularLocation>
        <location evidence="1">Endosome</location>
        <location evidence="1">Multivesicular body</location>
    </subcellularLocation>
    <text evidence="1">In the plasma, APOE is associated with chylomicrons, chylomicrons remnants, VLDL, LDL and HDL lipoproteins. Lipid poor oligomeric APOE is associated with the extracellular matrix in a calcium- and heparan-sulfate proteoglycans-dependent manner. Lipidation induces the release from the extracellular matrix. Colocalizes with CD63 and PMEL at exosomes and in intraluminal vesicles within multivesicular endosomes.</text>
</comment>
<comment type="PTM">
    <text evidence="1">APOE exists as multiple glycosylated and sialylated glycoforms within cells and in plasma. The extent of glycosylation and sialylation are tissue and context specific.</text>
</comment>
<comment type="PTM">
    <text evidence="1">Glycated in plasma VLDL.</text>
</comment>
<comment type="PTM">
    <text evidence="1">Phosphorylated by FAM20C in the extracellular medium.</text>
</comment>
<comment type="similarity">
    <text evidence="3">Belongs to the apolipoprotein A1/A4/E family.</text>
</comment>
<name>APOE_PTEPE</name>
<evidence type="ECO:0000250" key="1">
    <source>
        <dbReference type="UniProtKB" id="P02649"/>
    </source>
</evidence>
<evidence type="ECO:0000255" key="2"/>
<evidence type="ECO:0000305" key="3"/>
<proteinExistence type="inferred from homology"/>
<keyword id="KW-0162">Chylomicron</keyword>
<keyword id="KW-0967">Endosome</keyword>
<keyword id="KW-0272">Extracellular matrix</keyword>
<keyword id="KW-0325">Glycoprotein</keyword>
<keyword id="KW-0345">HDL</keyword>
<keyword id="KW-0358">Heparin-binding</keyword>
<keyword id="KW-0445">Lipid transport</keyword>
<keyword id="KW-0446">Lipid-binding</keyword>
<keyword id="KW-0558">Oxidation</keyword>
<keyword id="KW-0597">Phosphoprotein</keyword>
<keyword id="KW-0677">Repeat</keyword>
<keyword id="KW-0964">Secreted</keyword>
<keyword id="KW-0732">Signal</keyword>
<keyword id="KW-0813">Transport</keyword>
<keyword id="KW-0850">VLDL</keyword>
<sequence length="308" mass="35409">MKFLWAALVVTLLAGCRADVEEEVKLGQEPDRWQAKQPWEQALGRFWEYLRWVQTLSNKVKEELLNSQVTEELKLLIEETMKEVKAYKEELEKQVGPIAQETQARLSKELQAAQARLESDMEDVRTRLAQYRSEAQAALGQNTDDLQGRLASHLRKLRKRLLRDAEDLQKRLAVYQAGTHEAAERGVSAIHERLGPLMMEGPLQAIPPSQQLRERAEAWGQKVRGRLESVGSQARDRLDDMRDQMEELKAKVEEQASQVRLQAEAFQTRLKSWFEPLVQDMQRQWASLVEKVQSTLGISPSTKPSKTK</sequence>
<reference key="1">
    <citation type="submission" date="2020-08" db="EMBL/GenBank/DDBJ databases">
        <title>Draft genome sequence of Bonin flying fox.</title>
        <authorList>
            <person name="Nakajima N."/>
            <person name="Onuma M."/>
            <person name="Endoh D."/>
            <person name="Nagamine T."/>
            <person name="Nakaya Y."/>
        </authorList>
    </citation>
    <scope>NUCLEOTIDE SEQUENCE [LARGE SCALE GENOMIC DNA]</scope>
</reference>
<reference key="2">
    <citation type="unpublished observations" date="2021-01">
        <authorList>
            <person name="Puppione D.L."/>
        </authorList>
    </citation>
    <scope>IDENTIFICATION</scope>
</reference>
<protein>
    <recommendedName>
        <fullName>Apolipoprotein E</fullName>
        <shortName>Apo-E</shortName>
    </recommendedName>
</protein>
<dbReference type="EMBL" id="BMBI01005855">
    <property type="status" value="NOT_ANNOTATED_CDS"/>
    <property type="molecule type" value="Genomic_DNA"/>
</dbReference>
<dbReference type="SMR" id="P0DUJ2"/>
<dbReference type="GO" id="GO:0042627">
    <property type="term" value="C:chylomicron"/>
    <property type="evidence" value="ECO:0007669"/>
    <property type="project" value="UniProtKB-KW"/>
</dbReference>
<dbReference type="GO" id="GO:0070062">
    <property type="term" value="C:extracellular exosome"/>
    <property type="evidence" value="ECO:0000250"/>
    <property type="project" value="UniProtKB"/>
</dbReference>
<dbReference type="GO" id="GO:0034364">
    <property type="term" value="C:high-density lipoprotein particle"/>
    <property type="evidence" value="ECO:0007669"/>
    <property type="project" value="UniProtKB-KW"/>
</dbReference>
<dbReference type="GO" id="GO:0034362">
    <property type="term" value="C:low-density lipoprotein particle"/>
    <property type="evidence" value="ECO:0007669"/>
    <property type="project" value="TreeGrafter"/>
</dbReference>
<dbReference type="GO" id="GO:0097487">
    <property type="term" value="C:multivesicular body, internal vesicle"/>
    <property type="evidence" value="ECO:0000250"/>
    <property type="project" value="UniProtKB"/>
</dbReference>
<dbReference type="GO" id="GO:0034361">
    <property type="term" value="C:very-low-density lipoprotein particle"/>
    <property type="evidence" value="ECO:0007669"/>
    <property type="project" value="UniProtKB-KW"/>
</dbReference>
<dbReference type="GO" id="GO:0120020">
    <property type="term" value="F:cholesterol transfer activity"/>
    <property type="evidence" value="ECO:0007669"/>
    <property type="project" value="TreeGrafter"/>
</dbReference>
<dbReference type="GO" id="GO:0008201">
    <property type="term" value="F:heparin binding"/>
    <property type="evidence" value="ECO:0007669"/>
    <property type="project" value="UniProtKB-KW"/>
</dbReference>
<dbReference type="GO" id="GO:0060228">
    <property type="term" value="F:phosphatidylcholine-sterol O-acyltransferase activator activity"/>
    <property type="evidence" value="ECO:0007669"/>
    <property type="project" value="TreeGrafter"/>
</dbReference>
<dbReference type="GO" id="GO:0005543">
    <property type="term" value="F:phospholipid binding"/>
    <property type="evidence" value="ECO:0007669"/>
    <property type="project" value="TreeGrafter"/>
</dbReference>
<dbReference type="GO" id="GO:0055090">
    <property type="term" value="P:acylglycerol homeostasis"/>
    <property type="evidence" value="ECO:0007669"/>
    <property type="project" value="TreeGrafter"/>
</dbReference>
<dbReference type="GO" id="GO:0033344">
    <property type="term" value="P:cholesterol efflux"/>
    <property type="evidence" value="ECO:0007669"/>
    <property type="project" value="TreeGrafter"/>
</dbReference>
<dbReference type="GO" id="GO:0008203">
    <property type="term" value="P:cholesterol metabolic process"/>
    <property type="evidence" value="ECO:0007669"/>
    <property type="project" value="TreeGrafter"/>
</dbReference>
<dbReference type="GO" id="GO:0042157">
    <property type="term" value="P:lipoprotein metabolic process"/>
    <property type="evidence" value="ECO:0007669"/>
    <property type="project" value="InterPro"/>
</dbReference>
<dbReference type="GO" id="GO:0032438">
    <property type="term" value="P:melanosome organization"/>
    <property type="evidence" value="ECO:0000250"/>
    <property type="project" value="UniProtKB"/>
</dbReference>
<dbReference type="GO" id="GO:0033700">
    <property type="term" value="P:phospholipid efflux"/>
    <property type="evidence" value="ECO:0007669"/>
    <property type="project" value="TreeGrafter"/>
</dbReference>
<dbReference type="FunFam" id="1.20.120.20:FF:000002">
    <property type="entry name" value="Apolipoprotein E"/>
    <property type="match status" value="1"/>
</dbReference>
<dbReference type="FunFam" id="1.20.120.20:FF:000003">
    <property type="entry name" value="Apolipoprotein E"/>
    <property type="match status" value="1"/>
</dbReference>
<dbReference type="Gene3D" id="1.20.120.20">
    <property type="entry name" value="Apolipoprotein"/>
    <property type="match status" value="1"/>
</dbReference>
<dbReference type="Gene3D" id="1.20.5.1230">
    <property type="entry name" value="Apolipoprotein A-I"/>
    <property type="match status" value="1"/>
</dbReference>
<dbReference type="InterPro" id="IPR000074">
    <property type="entry name" value="ApoA_E"/>
</dbReference>
<dbReference type="InterPro" id="IPR050163">
    <property type="entry name" value="Apolipoprotein_A1/A4/E"/>
</dbReference>
<dbReference type="PANTHER" id="PTHR18976">
    <property type="entry name" value="APOLIPOPROTEIN"/>
    <property type="match status" value="1"/>
</dbReference>
<dbReference type="PANTHER" id="PTHR18976:SF2">
    <property type="entry name" value="APOLIPOPROTEIN E"/>
    <property type="match status" value="1"/>
</dbReference>
<dbReference type="Pfam" id="PF01442">
    <property type="entry name" value="Apolipoprotein"/>
    <property type="match status" value="1"/>
</dbReference>
<dbReference type="SUPFAM" id="SSF58113">
    <property type="entry name" value="Apolipoprotein A-I"/>
    <property type="match status" value="1"/>
</dbReference>
<gene>
    <name type="primary">APOE</name>
</gene>
<organism>
    <name type="scientific">Pteropus pselaphon</name>
    <name type="common">Bonin flying fox</name>
    <dbReference type="NCBI Taxonomy" id="1496133"/>
    <lineage>
        <taxon>Eukaryota</taxon>
        <taxon>Metazoa</taxon>
        <taxon>Chordata</taxon>
        <taxon>Craniata</taxon>
        <taxon>Vertebrata</taxon>
        <taxon>Euteleostomi</taxon>
        <taxon>Mammalia</taxon>
        <taxon>Eutheria</taxon>
        <taxon>Laurasiatheria</taxon>
        <taxon>Chiroptera</taxon>
        <taxon>Yinpterochiroptera</taxon>
        <taxon>Pteropodoidea</taxon>
        <taxon>Pteropodidae</taxon>
        <taxon>Pteropodinae</taxon>
        <taxon>Pteropus</taxon>
    </lineage>
</organism>
<accession>P0DUJ2</accession>